<keyword id="KW-0002">3D-structure</keyword>
<keyword id="KW-0067">ATP-binding</keyword>
<keyword id="KW-0347">Helicase</keyword>
<keyword id="KW-1035">Host cytoplasm</keyword>
<keyword id="KW-0378">Hydrolase</keyword>
<keyword id="KW-0547">Nucleotide-binding</keyword>
<keyword id="KW-1185">Reference proteome</keyword>
<protein>
    <recommendedName>
        <fullName>Uncoating factor OPG117</fullName>
        <ecNumber evidence="1">3.6.4.-</ecNumber>
    </recommendedName>
</protein>
<reference key="1">
    <citation type="journal article" date="2022" name="J. Infect. Dis.">
        <title>Exportation of Monkeypox virus from the African continent.</title>
        <authorList>
            <person name="Mauldin M.R."/>
            <person name="McCollum A.M."/>
            <person name="Nakazawa Y.J."/>
            <person name="Mandra A."/>
            <person name="Whitehouse E.R."/>
            <person name="Davidson W."/>
            <person name="Zhao H."/>
            <person name="Gao J."/>
            <person name="Li Y."/>
            <person name="Doty J."/>
            <person name="Yinka-Ogunleye A."/>
            <person name="Akinpelu A."/>
            <person name="Aruna O."/>
            <person name="Naidoo D."/>
            <person name="Lewandowski K."/>
            <person name="Afrough B."/>
            <person name="Graham V."/>
            <person name="Aarons E."/>
            <person name="Hewson R."/>
            <person name="Vipond R."/>
            <person name="Dunning J."/>
            <person name="Chand M."/>
            <person name="Brown C."/>
            <person name="Cohen-Gihon I."/>
            <person name="Erez N."/>
            <person name="Shifman O."/>
            <person name="Israeli O."/>
            <person name="Sharon M."/>
            <person name="Schwartz E."/>
            <person name="Beth-Din A."/>
            <person name="Zvi A."/>
            <person name="Mak T.M."/>
            <person name="Ng Y.K."/>
            <person name="Cui L."/>
            <person name="Lin R.T.P."/>
            <person name="Olson V.A."/>
            <person name="Brooks T."/>
            <person name="Paran N."/>
            <person name="Ihekweazu C."/>
            <person name="Reynolds M.G."/>
        </authorList>
    </citation>
    <scope>NUCLEOTIDE SEQUENCE [LARGE SCALE GENOMIC DNA]</scope>
    <source>
        <strain>MPXV-M5312_HM12_Rivers</strain>
    </source>
</reference>
<name>PG117_MONPV</name>
<accession>A0A7H0DN89</accession>
<feature type="chain" id="PRO_0000457390" description="Uncoating factor OPG117">
    <location>
        <begin position="1"/>
        <end position="785"/>
    </location>
</feature>
<feature type="helix" evidence="6">
    <location>
        <begin position="3"/>
        <end position="6"/>
    </location>
</feature>
<feature type="strand" evidence="5">
    <location>
        <begin position="11"/>
        <end position="18"/>
    </location>
</feature>
<feature type="helix" evidence="5">
    <location>
        <begin position="21"/>
        <end position="26"/>
    </location>
</feature>
<feature type="turn" evidence="5">
    <location>
        <begin position="29"/>
        <end position="31"/>
    </location>
</feature>
<feature type="strand" evidence="5">
    <location>
        <begin position="32"/>
        <end position="35"/>
    </location>
</feature>
<feature type="helix" evidence="5">
    <location>
        <begin position="37"/>
        <end position="46"/>
    </location>
</feature>
<feature type="strand" evidence="6">
    <location>
        <begin position="53"/>
        <end position="55"/>
    </location>
</feature>
<feature type="turn" evidence="5">
    <location>
        <begin position="59"/>
        <end position="61"/>
    </location>
</feature>
<feature type="strand" evidence="5">
    <location>
        <begin position="64"/>
        <end position="73"/>
    </location>
</feature>
<feature type="helix" evidence="5">
    <location>
        <begin position="79"/>
        <end position="104"/>
    </location>
</feature>
<feature type="helix" evidence="5">
    <location>
        <begin position="109"/>
        <end position="118"/>
    </location>
</feature>
<feature type="strand" evidence="5">
    <location>
        <begin position="121"/>
        <end position="126"/>
    </location>
</feature>
<feature type="strand" evidence="5">
    <location>
        <begin position="130"/>
        <end position="143"/>
    </location>
</feature>
<feature type="helix" evidence="5">
    <location>
        <begin position="144"/>
        <end position="149"/>
    </location>
</feature>
<feature type="helix" evidence="5">
    <location>
        <begin position="151"/>
        <end position="160"/>
    </location>
</feature>
<feature type="helix" evidence="5">
    <location>
        <begin position="166"/>
        <end position="168"/>
    </location>
</feature>
<feature type="helix" evidence="5">
    <location>
        <begin position="171"/>
        <end position="173"/>
    </location>
</feature>
<feature type="strand" evidence="6">
    <location>
        <begin position="175"/>
        <end position="177"/>
    </location>
</feature>
<feature type="strand" evidence="6">
    <location>
        <begin position="185"/>
        <end position="188"/>
    </location>
</feature>
<feature type="strand" evidence="5">
    <location>
        <begin position="195"/>
        <end position="197"/>
    </location>
</feature>
<feature type="helix" evidence="5">
    <location>
        <begin position="204"/>
        <end position="207"/>
    </location>
</feature>
<feature type="strand" evidence="6">
    <location>
        <begin position="219"/>
        <end position="221"/>
    </location>
</feature>
<feature type="helix" evidence="6">
    <location>
        <begin position="243"/>
        <end position="253"/>
    </location>
</feature>
<feature type="strand" evidence="6">
    <location>
        <begin position="256"/>
        <end position="260"/>
    </location>
</feature>
<feature type="helix" evidence="6">
    <location>
        <begin position="261"/>
        <end position="263"/>
    </location>
</feature>
<feature type="turn" evidence="6">
    <location>
        <begin position="266"/>
        <end position="271"/>
    </location>
</feature>
<feature type="turn" evidence="6">
    <location>
        <begin position="283"/>
        <end position="285"/>
    </location>
</feature>
<feature type="strand" evidence="6">
    <location>
        <begin position="294"/>
        <end position="299"/>
    </location>
</feature>
<feature type="strand" evidence="6">
    <location>
        <begin position="302"/>
        <end position="309"/>
    </location>
</feature>
<feature type="strand" evidence="6">
    <location>
        <begin position="317"/>
        <end position="320"/>
    </location>
</feature>
<feature type="helix" evidence="8">
    <location>
        <begin position="325"/>
        <end position="334"/>
    </location>
</feature>
<feature type="turn" evidence="8">
    <location>
        <begin position="335"/>
        <end position="337"/>
    </location>
</feature>
<feature type="strand" evidence="8">
    <location>
        <begin position="339"/>
        <end position="341"/>
    </location>
</feature>
<feature type="strand" evidence="6">
    <location>
        <begin position="343"/>
        <end position="345"/>
    </location>
</feature>
<feature type="strand" evidence="8">
    <location>
        <begin position="347"/>
        <end position="351"/>
    </location>
</feature>
<feature type="strand" evidence="8">
    <location>
        <begin position="354"/>
        <end position="356"/>
    </location>
</feature>
<feature type="strand" evidence="3">
    <location>
        <begin position="359"/>
        <end position="361"/>
    </location>
</feature>
<feature type="helix" evidence="8">
    <location>
        <begin position="363"/>
        <end position="370"/>
    </location>
</feature>
<feature type="helix" evidence="8">
    <location>
        <begin position="371"/>
        <end position="374"/>
    </location>
</feature>
<feature type="helix" evidence="8">
    <location>
        <begin position="377"/>
        <end position="380"/>
    </location>
</feature>
<feature type="helix" evidence="8">
    <location>
        <begin position="381"/>
        <end position="384"/>
    </location>
</feature>
<feature type="helix" evidence="8">
    <location>
        <begin position="386"/>
        <end position="399"/>
    </location>
</feature>
<feature type="strand" evidence="8">
    <location>
        <begin position="412"/>
        <end position="414"/>
    </location>
</feature>
<feature type="strand" evidence="8">
    <location>
        <begin position="419"/>
        <end position="421"/>
    </location>
</feature>
<feature type="turn" evidence="8">
    <location>
        <begin position="422"/>
        <end position="424"/>
    </location>
</feature>
<feature type="strand" evidence="3">
    <location>
        <begin position="426"/>
        <end position="428"/>
    </location>
</feature>
<feature type="helix" evidence="8">
    <location>
        <begin position="431"/>
        <end position="434"/>
    </location>
</feature>
<feature type="turn" evidence="4">
    <location>
        <begin position="448"/>
        <end position="450"/>
    </location>
</feature>
<feature type="strand" evidence="6">
    <location>
        <begin position="451"/>
        <end position="453"/>
    </location>
</feature>
<feature type="helix" evidence="8">
    <location>
        <begin position="456"/>
        <end position="468"/>
    </location>
</feature>
<feature type="helix" evidence="4">
    <location>
        <begin position="473"/>
        <end position="475"/>
    </location>
</feature>
<feature type="helix" evidence="8">
    <location>
        <begin position="476"/>
        <end position="483"/>
    </location>
</feature>
<feature type="helix" evidence="8">
    <location>
        <begin position="487"/>
        <end position="490"/>
    </location>
</feature>
<feature type="strand" evidence="8">
    <location>
        <begin position="498"/>
        <end position="503"/>
    </location>
</feature>
<feature type="strand" evidence="8">
    <location>
        <begin position="505"/>
        <end position="508"/>
    </location>
</feature>
<feature type="helix" evidence="8">
    <location>
        <begin position="509"/>
        <end position="520"/>
    </location>
</feature>
<feature type="helix" evidence="8">
    <location>
        <begin position="521"/>
        <end position="523"/>
    </location>
</feature>
<feature type="strand" evidence="8">
    <location>
        <begin position="524"/>
        <end position="526"/>
    </location>
</feature>
<feature type="helix" evidence="8">
    <location>
        <begin position="530"/>
        <end position="533"/>
    </location>
</feature>
<feature type="strand" evidence="8">
    <location>
        <begin position="538"/>
        <end position="540"/>
    </location>
</feature>
<feature type="helix" evidence="8">
    <location>
        <begin position="542"/>
        <end position="545"/>
    </location>
</feature>
<feature type="turn" evidence="8">
    <location>
        <begin position="546"/>
        <end position="549"/>
    </location>
</feature>
<feature type="strand" evidence="8">
    <location>
        <begin position="551"/>
        <end position="556"/>
    </location>
</feature>
<feature type="turn" evidence="8">
    <location>
        <begin position="561"/>
        <end position="563"/>
    </location>
</feature>
<feature type="helix" evidence="8">
    <location>
        <begin position="571"/>
        <end position="576"/>
    </location>
</feature>
<feature type="strand" evidence="8">
    <location>
        <begin position="579"/>
        <end position="583"/>
    </location>
</feature>
<feature type="strand" evidence="8">
    <location>
        <begin position="593"/>
        <end position="595"/>
    </location>
</feature>
<feature type="strand" evidence="8">
    <location>
        <begin position="599"/>
        <end position="606"/>
    </location>
</feature>
<feature type="strand" evidence="8">
    <location>
        <begin position="610"/>
        <end position="612"/>
    </location>
</feature>
<feature type="helix" evidence="8">
    <location>
        <begin position="617"/>
        <end position="619"/>
    </location>
</feature>
<feature type="strand" evidence="8">
    <location>
        <begin position="620"/>
        <end position="626"/>
    </location>
</feature>
<feature type="strand" evidence="8">
    <location>
        <begin position="628"/>
        <end position="631"/>
    </location>
</feature>
<feature type="helix" evidence="8">
    <location>
        <begin position="633"/>
        <end position="635"/>
    </location>
</feature>
<feature type="helix" evidence="8">
    <location>
        <begin position="636"/>
        <end position="640"/>
    </location>
</feature>
<feature type="strand" evidence="8">
    <location>
        <begin position="646"/>
        <end position="650"/>
    </location>
</feature>
<feature type="helix" evidence="8">
    <location>
        <begin position="655"/>
        <end position="660"/>
    </location>
</feature>
<feature type="turn" evidence="7">
    <location>
        <begin position="661"/>
        <end position="664"/>
    </location>
</feature>
<feature type="helix" evidence="8">
    <location>
        <begin position="665"/>
        <end position="679"/>
    </location>
</feature>
<feature type="strand" evidence="7">
    <location>
        <begin position="680"/>
        <end position="682"/>
    </location>
</feature>
<feature type="helix" evidence="8">
    <location>
        <begin position="690"/>
        <end position="692"/>
    </location>
</feature>
<feature type="helix" evidence="8">
    <location>
        <begin position="694"/>
        <end position="696"/>
    </location>
</feature>
<feature type="helix" evidence="8">
    <location>
        <begin position="697"/>
        <end position="705"/>
    </location>
</feature>
<feature type="strand" evidence="4">
    <location>
        <begin position="706"/>
        <end position="708"/>
    </location>
</feature>
<feature type="strand" evidence="7">
    <location>
        <begin position="709"/>
        <end position="714"/>
    </location>
</feature>
<feature type="helix" evidence="7">
    <location>
        <begin position="715"/>
        <end position="718"/>
    </location>
</feature>
<feature type="strand" evidence="4">
    <location>
        <begin position="726"/>
        <end position="730"/>
    </location>
</feature>
<feature type="strand" evidence="4">
    <location>
        <begin position="732"/>
        <end position="734"/>
    </location>
</feature>
<feature type="helix" evidence="8">
    <location>
        <begin position="736"/>
        <end position="744"/>
    </location>
</feature>
<feature type="turn" evidence="8">
    <location>
        <begin position="749"/>
        <end position="751"/>
    </location>
</feature>
<feature type="helix" evidence="8">
    <location>
        <begin position="753"/>
        <end position="761"/>
    </location>
</feature>
<feature type="strand" evidence="4">
    <location>
        <begin position="767"/>
        <end position="770"/>
    </location>
</feature>
<feature type="strand" evidence="7">
    <location>
        <begin position="777"/>
        <end position="779"/>
    </location>
</feature>
<proteinExistence type="evidence at protein level"/>
<sequence>MDAAIRGNDVIFVLKTIGVPSACRQNEDPRFVEAFKCDELERYIDNNPECTLFESLRDEEAYSIVRIFMDVDLDACLDEIDYLTAIQDFIIEVSNCVARFAFTECGAIHENVIKSMRSNFSLTKSTNRDKTSFHIIFLDTYTTMDTLIAMKRTLLELSRSSENPLTRSIDTAVYRRKTTLRVVGTRKNPNCDTIHVMQPPHDNIEDYLFTYVDMNNNSYYFSLQRRLEDLVPDKLWEPGFISFEDAIKRVSKIFINSIINFNDLDENNFTTVPLVIDYVTPCALCKKRSHKHPHQLSLENGAIRIYKTGNPHSCKVKIVPLDGNKLFNIAQRILDTNSVLLTERGDHIVWINNSWKFNSEEPLITKLILSIRHQLPKEYSSELLCPRKRKTVEANIRDMLVDSVETDTYPDKLPFKNGVLDLVDGMFYSGDDAKKYTCTVSTGFKFDDTKFVEDSPEMEELMNIINDIQPLTDENKKNRELYEKTLSSCLCGATKGCLTFFFGETATGKSTTKRLLKSAIGDLFVETGQTILTDVLDKGPNPFIANMHLKRSVFCSELPDFACSGSKKIRSDNIKKLTEPCVIGRPCFSNKINNRNHATIIIDTNYKPVFDRIDNALMRRIAVVRFRTHFSQPSGREAAENNDAYDKVKLLDEGLDGKIQNNRYRFAFLYLLVKWYKKYHIPIMKLYPTPEEIPDFAFYLKIGTLLVSSSVKHIPLMTDLSKKGYILYDNVVTLPLTTFQQKISKYFNSRLFGHDIESFINRHKKFANVSDEYLQYIFIEDISSP</sequence>
<organismHost>
    <name type="scientific">Cynomys gunnisoni</name>
    <name type="common">Gunnison's prairie dog</name>
    <name type="synonym">Spermophilus gunnisoni</name>
    <dbReference type="NCBI Taxonomy" id="45479"/>
</organismHost>
<organismHost>
    <name type="scientific">Cynomys leucurus</name>
    <name type="common">White-tailed prairie dog</name>
    <dbReference type="NCBI Taxonomy" id="99825"/>
</organismHost>
<organismHost>
    <name type="scientific">Cynomys ludovicianus</name>
    <name type="common">Black-tailed prairie dog</name>
    <dbReference type="NCBI Taxonomy" id="45480"/>
</organismHost>
<organismHost>
    <name type="scientific">Cynomys mexicanus</name>
    <name type="common">Mexican prairie dog</name>
    <dbReference type="NCBI Taxonomy" id="99826"/>
</organismHost>
<organismHost>
    <name type="scientific">Cynomys parvidens</name>
    <name type="common">Utah prairie dog</name>
    <dbReference type="NCBI Taxonomy" id="99827"/>
</organismHost>
<organismHost>
    <name type="scientific">Gliridae</name>
    <name type="common">dormice</name>
    <dbReference type="NCBI Taxonomy" id="30650"/>
</organismHost>
<organismHost>
    <name type="scientific">Heliosciurus ruwenzorii</name>
    <name type="common">Ruwenzori sun squirrel</name>
    <dbReference type="NCBI Taxonomy" id="226685"/>
</organismHost>
<organismHost>
    <name type="scientific">Homo sapiens</name>
    <name type="common">Human</name>
    <dbReference type="NCBI Taxonomy" id="9606"/>
</organismHost>
<organismHost>
    <name type="scientific">Mus musculus</name>
    <name type="common">Mouse</name>
    <dbReference type="NCBI Taxonomy" id="10090"/>
</organismHost>
<organism>
    <name type="scientific">Monkeypox virus</name>
    <dbReference type="NCBI Taxonomy" id="10244"/>
    <lineage>
        <taxon>Viruses</taxon>
        <taxon>Varidnaviria</taxon>
        <taxon>Bamfordvirae</taxon>
        <taxon>Nucleocytoviricota</taxon>
        <taxon>Pokkesviricetes</taxon>
        <taxon>Chitovirales</taxon>
        <taxon>Poxviridae</taxon>
        <taxon>Chordopoxvirinae</taxon>
        <taxon>Orthopoxvirus</taxon>
    </lineage>
</organism>
<gene>
    <name type="primary">OPG117</name>
    <name type="ORF">MPXVgp100</name>
</gene>
<comment type="function">
    <text evidence="1">Multifunctional protein required for genome uncoating and replication. Major viral uncoating protein that is required for the release of the viral genome from incoming viral cores containing the viral DNA genome. Possesses an ATPase activity that is required for hexamerization and uncoating.</text>
</comment>
<comment type="subunit">
    <text evidence="1">Homomultimer; hexamer. Interacts with OPG148.</text>
</comment>
<comment type="subcellular location">
    <subcellularLocation>
        <location evidence="1">Host cytoplasm</location>
    </subcellularLocation>
    <text evidence="1">Colocalizes with free cytoplasmic cores containing the viral DNA genome.</text>
</comment>
<comment type="similarity">
    <text evidence="2">Belongs to the orthopoxvirus OPG117 family.</text>
</comment>
<evidence type="ECO:0000250" key="1">
    <source>
        <dbReference type="UniProtKB" id="P04305"/>
    </source>
</evidence>
<evidence type="ECO:0000305" key="2"/>
<evidence type="ECO:0007829" key="3">
    <source>
        <dbReference type="PDB" id="8HWG"/>
    </source>
</evidence>
<evidence type="ECO:0007829" key="4">
    <source>
        <dbReference type="PDB" id="8WH2"/>
    </source>
</evidence>
<evidence type="ECO:0007829" key="5">
    <source>
        <dbReference type="PDB" id="8XIG"/>
    </source>
</evidence>
<evidence type="ECO:0007829" key="6">
    <source>
        <dbReference type="PDB" id="8XJ6"/>
    </source>
</evidence>
<evidence type="ECO:0007829" key="7">
    <source>
        <dbReference type="PDB" id="8XJ7"/>
    </source>
</evidence>
<evidence type="ECO:0007829" key="8">
    <source>
        <dbReference type="PDB" id="8XJ8"/>
    </source>
</evidence>
<dbReference type="EC" id="3.6.4.-" evidence="1"/>
<dbReference type="EMBL" id="MT903340">
    <property type="protein sequence ID" value="QNP12972.1"/>
    <property type="molecule type" value="Genomic_DNA"/>
</dbReference>
<dbReference type="RefSeq" id="YP_010377099.1">
    <property type="nucleotide sequence ID" value="NC_063383.1"/>
</dbReference>
<dbReference type="PDB" id="8HWA">
    <property type="method" value="EM"/>
    <property type="resolution" value="3.70 A"/>
    <property type="chains" value="A/B/C/D/E/F/K=1-785"/>
</dbReference>
<dbReference type="PDB" id="8HWB">
    <property type="method" value="EM"/>
    <property type="resolution" value="3.90 A"/>
    <property type="chains" value="A/B/C/D/E/F/K=1-785"/>
</dbReference>
<dbReference type="PDB" id="8HWC">
    <property type="method" value="EM"/>
    <property type="resolution" value="3.30 A"/>
    <property type="chains" value="A/B/C/D/E/F=1-785"/>
</dbReference>
<dbReference type="PDB" id="8HWD">
    <property type="method" value="EM"/>
    <property type="resolution" value="3.30 A"/>
    <property type="chains" value="A/B/C/D/E/F=1-785"/>
</dbReference>
<dbReference type="PDB" id="8HWE">
    <property type="method" value="EM"/>
    <property type="resolution" value="3.30 A"/>
    <property type="chains" value="A/B/C/D/E/F=1-785"/>
</dbReference>
<dbReference type="PDB" id="8HWF">
    <property type="method" value="EM"/>
    <property type="resolution" value="3.30 A"/>
    <property type="chains" value="A/B/C/D/E/F=1-785"/>
</dbReference>
<dbReference type="PDB" id="8HWG">
    <property type="method" value="EM"/>
    <property type="resolution" value="3.00 A"/>
    <property type="chains" value="A/B/C/D/E/F=1-785"/>
</dbReference>
<dbReference type="PDB" id="8HWH">
    <property type="method" value="EM"/>
    <property type="resolution" value="3.60 A"/>
    <property type="chains" value="A/B/C/D/E/F=1-785"/>
</dbReference>
<dbReference type="PDB" id="8WGY">
    <property type="method" value="EM"/>
    <property type="resolution" value="2.91 A"/>
    <property type="chains" value="A/B/C/D/E/F=1-785"/>
</dbReference>
<dbReference type="PDB" id="8WGZ">
    <property type="method" value="EM"/>
    <property type="resolution" value="3.22 A"/>
    <property type="chains" value="A/B/C/D/E/F/G/H/I/J/K/L=1-785"/>
</dbReference>
<dbReference type="PDB" id="8WH0">
    <property type="method" value="EM"/>
    <property type="resolution" value="2.51 A"/>
    <property type="chains" value="A/B/C/D/E/F=1-785"/>
</dbReference>
<dbReference type="PDB" id="8WH2">
    <property type="method" value="EM"/>
    <property type="resolution" value="2.90 A"/>
    <property type="chains" value="A/B/C/D/E/F=1-785"/>
</dbReference>
<dbReference type="PDB" id="8WH3">
    <property type="method" value="EM"/>
    <property type="resolution" value="2.87 A"/>
    <property type="chains" value="A/B/C/D/E/F=1-785"/>
</dbReference>
<dbReference type="PDB" id="8WH4">
    <property type="method" value="EM"/>
    <property type="resolution" value="3.03 A"/>
    <property type="chains" value="A/B/C/D/E/F=1-785"/>
</dbReference>
<dbReference type="PDB" id="8WH6">
    <property type="method" value="EM"/>
    <property type="resolution" value="3.27 A"/>
    <property type="chains" value="A/B/C/D/E/F=1-785"/>
</dbReference>
<dbReference type="PDB" id="8XIG">
    <property type="method" value="X-ray"/>
    <property type="resolution" value="1.65 A"/>
    <property type="chains" value="A=1-224"/>
</dbReference>
<dbReference type="PDB" id="8XJ6">
    <property type="method" value="EM"/>
    <property type="resolution" value="3.32 A"/>
    <property type="chains" value="A/B/C/D/E/F=1-785"/>
</dbReference>
<dbReference type="PDB" id="8XJ7">
    <property type="method" value="EM"/>
    <property type="resolution" value="2.74 A"/>
    <property type="chains" value="A/B/C/D/E/F=1-785"/>
</dbReference>
<dbReference type="PDB" id="8XJ8">
    <property type="method" value="EM"/>
    <property type="resolution" value="2.67 A"/>
    <property type="chains" value="A/B/C/D/E/F=323-785"/>
</dbReference>
<dbReference type="PDBsum" id="8HWA"/>
<dbReference type="PDBsum" id="8HWB"/>
<dbReference type="PDBsum" id="8HWC"/>
<dbReference type="PDBsum" id="8HWD"/>
<dbReference type="PDBsum" id="8HWE"/>
<dbReference type="PDBsum" id="8HWF"/>
<dbReference type="PDBsum" id="8HWG"/>
<dbReference type="PDBsum" id="8HWH"/>
<dbReference type="PDBsum" id="8WGY"/>
<dbReference type="PDBsum" id="8WGZ"/>
<dbReference type="PDBsum" id="8WH0"/>
<dbReference type="PDBsum" id="8WH2"/>
<dbReference type="PDBsum" id="8WH3"/>
<dbReference type="PDBsum" id="8WH4"/>
<dbReference type="PDBsum" id="8WH6"/>
<dbReference type="PDBsum" id="8XIG"/>
<dbReference type="PDBsum" id="8XJ6"/>
<dbReference type="PDBsum" id="8XJ7"/>
<dbReference type="PDBsum" id="8XJ8"/>
<dbReference type="EMDB" id="EMD-38396"/>
<dbReference type="SMR" id="A0A7H0DN89"/>
<dbReference type="GeneID" id="72551512"/>
<dbReference type="Proteomes" id="UP000516359">
    <property type="component" value="Genome"/>
</dbReference>
<dbReference type="GO" id="GO:0030430">
    <property type="term" value="C:host cell cytoplasm"/>
    <property type="evidence" value="ECO:0007669"/>
    <property type="project" value="UniProtKB-SubCell"/>
</dbReference>
<dbReference type="GO" id="GO:0005524">
    <property type="term" value="F:ATP binding"/>
    <property type="evidence" value="ECO:0007669"/>
    <property type="project" value="UniProtKB-KW"/>
</dbReference>
<dbReference type="GO" id="GO:0004386">
    <property type="term" value="F:helicase activity"/>
    <property type="evidence" value="ECO:0007669"/>
    <property type="project" value="UniProtKB-KW"/>
</dbReference>
<dbReference type="GO" id="GO:0016787">
    <property type="term" value="F:hydrolase activity"/>
    <property type="evidence" value="ECO:0007669"/>
    <property type="project" value="UniProtKB-KW"/>
</dbReference>
<dbReference type="Gene3D" id="3.40.50.300">
    <property type="entry name" value="P-loop containing nucleotide triphosphate hydrolases"/>
    <property type="match status" value="1"/>
</dbReference>
<dbReference type="InterPro" id="IPR004968">
    <property type="entry name" value="DNA_primase/NTPase_C"/>
</dbReference>
<dbReference type="InterPro" id="IPR014015">
    <property type="entry name" value="Helicase_SF3_DNA-vir"/>
</dbReference>
<dbReference type="InterPro" id="IPR027417">
    <property type="entry name" value="P-loop_NTPase"/>
</dbReference>
<dbReference type="InterPro" id="IPR014818">
    <property type="entry name" value="Phage/plasmid_primase_P4_C"/>
</dbReference>
<dbReference type="InterPro" id="IPR051620">
    <property type="entry name" value="Viral_Helicase-Primase_Cplx"/>
</dbReference>
<dbReference type="PANTHER" id="PTHR35372">
    <property type="entry name" value="ATP BINDING PROTEIN-RELATED"/>
    <property type="match status" value="1"/>
</dbReference>
<dbReference type="PANTHER" id="PTHR35372:SF2">
    <property type="entry name" value="SF3 HELICASE DOMAIN-CONTAINING PROTEIN"/>
    <property type="match status" value="1"/>
</dbReference>
<dbReference type="Pfam" id="PF08706">
    <property type="entry name" value="D5_N"/>
    <property type="match status" value="1"/>
</dbReference>
<dbReference type="Pfam" id="PF03288">
    <property type="entry name" value="Pox_D5"/>
    <property type="match status" value="1"/>
</dbReference>
<dbReference type="PROSITE" id="PS51206">
    <property type="entry name" value="SF3_HELICASE_1"/>
    <property type="match status" value="1"/>
</dbReference>